<comment type="function">
    <text evidence="1">Essential cell division protein.</text>
</comment>
<comment type="subcellular location">
    <subcellularLocation>
        <location evidence="1">Cell inner membrane</location>
        <topology evidence="1">Single-pass type II membrane protein</topology>
    </subcellularLocation>
    <text evidence="1">Localizes to the division septum.</text>
</comment>
<comment type="similarity">
    <text evidence="1">Belongs to the FtsQ/DivIB family. FtsQ subfamily.</text>
</comment>
<evidence type="ECO:0000255" key="1">
    <source>
        <dbReference type="HAMAP-Rule" id="MF_00911"/>
    </source>
</evidence>
<evidence type="ECO:0000255" key="2">
    <source>
        <dbReference type="PROSITE-ProRule" id="PRU01115"/>
    </source>
</evidence>
<evidence type="ECO:0000256" key="3">
    <source>
        <dbReference type="SAM" id="MobiDB-lite"/>
    </source>
</evidence>
<gene>
    <name evidence="1" type="primary">ftsQ</name>
    <name type="ordered locus">AnaeK_3832</name>
</gene>
<name>FTSQ_ANASK</name>
<sequence>MARGPNRRRVDRVPGERRRRLARAMALALPSILALAALGGAATLGWRVGWKSDLLRVREIRFEGLSRATPQELLDLSPVQPGDHLLFLDTDAMAAALRRHPWIASAQVRRTFPPALEVQLAERRPAALVDLGGLYLVDDRGEVFKRAVPGDGLDLPVITGIEREAWAEGRGELAPLLGGALALLGRWSARGLDARSTISEIHVDPEYGTTLWSDEGTEIRLGQGDLEEKLTRLHRVLSALDAEGERAEVLHLDNRRRPDWVAVRVAGRRGEPDGRSSYAAGGGGGPQGRSSSLR</sequence>
<accession>B4UES6</accession>
<proteinExistence type="inferred from homology"/>
<reference key="1">
    <citation type="submission" date="2008-08" db="EMBL/GenBank/DDBJ databases">
        <title>Complete sequence of Anaeromyxobacter sp. K.</title>
        <authorList>
            <consortium name="US DOE Joint Genome Institute"/>
            <person name="Lucas S."/>
            <person name="Copeland A."/>
            <person name="Lapidus A."/>
            <person name="Glavina del Rio T."/>
            <person name="Dalin E."/>
            <person name="Tice H."/>
            <person name="Bruce D."/>
            <person name="Goodwin L."/>
            <person name="Pitluck S."/>
            <person name="Saunders E."/>
            <person name="Brettin T."/>
            <person name="Detter J.C."/>
            <person name="Han C."/>
            <person name="Larimer F."/>
            <person name="Land M."/>
            <person name="Hauser L."/>
            <person name="Kyrpides N."/>
            <person name="Ovchinnikiva G."/>
            <person name="Beliaev A."/>
        </authorList>
    </citation>
    <scope>NUCLEOTIDE SEQUENCE [LARGE SCALE GENOMIC DNA]</scope>
    <source>
        <strain>K</strain>
    </source>
</reference>
<keyword id="KW-0131">Cell cycle</keyword>
<keyword id="KW-0132">Cell division</keyword>
<keyword id="KW-0997">Cell inner membrane</keyword>
<keyword id="KW-1003">Cell membrane</keyword>
<keyword id="KW-0472">Membrane</keyword>
<keyword id="KW-0812">Transmembrane</keyword>
<keyword id="KW-1133">Transmembrane helix</keyword>
<dbReference type="EMBL" id="CP001131">
    <property type="protein sequence ID" value="ACG75043.1"/>
    <property type="molecule type" value="Genomic_DNA"/>
</dbReference>
<dbReference type="RefSeq" id="WP_012527803.1">
    <property type="nucleotide sequence ID" value="NC_011145.1"/>
</dbReference>
<dbReference type="SMR" id="B4UES6"/>
<dbReference type="KEGG" id="ank:AnaeK_3832"/>
<dbReference type="HOGENOM" id="CLU_047677_3_0_7"/>
<dbReference type="OrthoDB" id="5379889at2"/>
<dbReference type="Proteomes" id="UP000001871">
    <property type="component" value="Chromosome"/>
</dbReference>
<dbReference type="GO" id="GO:0032153">
    <property type="term" value="C:cell division site"/>
    <property type="evidence" value="ECO:0007669"/>
    <property type="project" value="UniProtKB-UniRule"/>
</dbReference>
<dbReference type="GO" id="GO:0005886">
    <property type="term" value="C:plasma membrane"/>
    <property type="evidence" value="ECO:0007669"/>
    <property type="project" value="UniProtKB-SubCell"/>
</dbReference>
<dbReference type="GO" id="GO:0090529">
    <property type="term" value="P:cell septum assembly"/>
    <property type="evidence" value="ECO:0007669"/>
    <property type="project" value="InterPro"/>
</dbReference>
<dbReference type="GO" id="GO:0043093">
    <property type="term" value="P:FtsZ-dependent cytokinesis"/>
    <property type="evidence" value="ECO:0007669"/>
    <property type="project" value="UniProtKB-UniRule"/>
</dbReference>
<dbReference type="Gene3D" id="3.40.50.11690">
    <property type="entry name" value="Cell division protein FtsQ/DivIB"/>
    <property type="match status" value="1"/>
</dbReference>
<dbReference type="Gene3D" id="3.10.20.310">
    <property type="entry name" value="membrane protein fhac"/>
    <property type="match status" value="1"/>
</dbReference>
<dbReference type="HAMAP" id="MF_00911">
    <property type="entry name" value="FtsQ_subfam"/>
    <property type="match status" value="1"/>
</dbReference>
<dbReference type="InterPro" id="IPR005548">
    <property type="entry name" value="Cell_div_FtsQ/DivIB_C"/>
</dbReference>
<dbReference type="InterPro" id="IPR026579">
    <property type="entry name" value="FtsQ"/>
</dbReference>
<dbReference type="InterPro" id="IPR045335">
    <property type="entry name" value="FtsQ_C_sf"/>
</dbReference>
<dbReference type="InterPro" id="IPR034746">
    <property type="entry name" value="POTRA"/>
</dbReference>
<dbReference type="InterPro" id="IPR013685">
    <property type="entry name" value="POTRA_FtsQ_type"/>
</dbReference>
<dbReference type="PANTHER" id="PTHR35851">
    <property type="entry name" value="CELL DIVISION PROTEIN FTSQ"/>
    <property type="match status" value="1"/>
</dbReference>
<dbReference type="PANTHER" id="PTHR35851:SF1">
    <property type="entry name" value="CELL DIVISION PROTEIN FTSQ"/>
    <property type="match status" value="1"/>
</dbReference>
<dbReference type="Pfam" id="PF03799">
    <property type="entry name" value="FtsQ_DivIB_C"/>
    <property type="match status" value="1"/>
</dbReference>
<dbReference type="Pfam" id="PF08478">
    <property type="entry name" value="POTRA_1"/>
    <property type="match status" value="1"/>
</dbReference>
<dbReference type="PROSITE" id="PS51779">
    <property type="entry name" value="POTRA"/>
    <property type="match status" value="1"/>
</dbReference>
<feature type="chain" id="PRO_0000414658" description="Cell division protein FtsQ">
    <location>
        <begin position="1"/>
        <end position="294"/>
    </location>
</feature>
<feature type="topological domain" description="Cytoplasmic" evidence="1">
    <location>
        <begin position="1"/>
        <end position="26"/>
    </location>
</feature>
<feature type="transmembrane region" description="Helical" evidence="1">
    <location>
        <begin position="27"/>
        <end position="49"/>
    </location>
</feature>
<feature type="topological domain" description="Periplasmic" evidence="1">
    <location>
        <begin position="50"/>
        <end position="294"/>
    </location>
</feature>
<feature type="domain" description="POTRA" evidence="2">
    <location>
        <begin position="55"/>
        <end position="123"/>
    </location>
</feature>
<feature type="region of interest" description="Disordered" evidence="3">
    <location>
        <begin position="266"/>
        <end position="294"/>
    </location>
</feature>
<protein>
    <recommendedName>
        <fullName evidence="1">Cell division protein FtsQ</fullName>
    </recommendedName>
</protein>
<organism>
    <name type="scientific">Anaeromyxobacter sp. (strain K)</name>
    <dbReference type="NCBI Taxonomy" id="447217"/>
    <lineage>
        <taxon>Bacteria</taxon>
        <taxon>Pseudomonadati</taxon>
        <taxon>Myxococcota</taxon>
        <taxon>Myxococcia</taxon>
        <taxon>Myxococcales</taxon>
        <taxon>Cystobacterineae</taxon>
        <taxon>Anaeromyxobacteraceae</taxon>
        <taxon>Anaeromyxobacter</taxon>
    </lineage>
</organism>